<name>DLTA_LISW6</name>
<dbReference type="EC" id="6.2.1.54" evidence="1"/>
<dbReference type="EMBL" id="AM263198">
    <property type="protein sequence ID" value="CAK20374.1"/>
    <property type="molecule type" value="Genomic_DNA"/>
</dbReference>
<dbReference type="RefSeq" id="WP_011701785.1">
    <property type="nucleotide sequence ID" value="NC_008555.1"/>
</dbReference>
<dbReference type="SMR" id="A0AH92"/>
<dbReference type="STRING" id="386043.lwe0956"/>
<dbReference type="GeneID" id="61188847"/>
<dbReference type="KEGG" id="lwe:lwe0956"/>
<dbReference type="eggNOG" id="COG1020">
    <property type="taxonomic scope" value="Bacteria"/>
</dbReference>
<dbReference type="HOGENOM" id="CLU_000022_2_12_9"/>
<dbReference type="OrthoDB" id="9765680at2"/>
<dbReference type="UniPathway" id="UPA00556"/>
<dbReference type="Proteomes" id="UP000000779">
    <property type="component" value="Chromosome"/>
</dbReference>
<dbReference type="GO" id="GO:0005737">
    <property type="term" value="C:cytoplasm"/>
    <property type="evidence" value="ECO:0007669"/>
    <property type="project" value="UniProtKB-SubCell"/>
</dbReference>
<dbReference type="GO" id="GO:0005524">
    <property type="term" value="F:ATP binding"/>
    <property type="evidence" value="ECO:0007669"/>
    <property type="project" value="UniProtKB-KW"/>
</dbReference>
<dbReference type="GO" id="GO:0047473">
    <property type="term" value="F:D-alanine [D-alanyl carrier protein] ligase activity"/>
    <property type="evidence" value="ECO:0007669"/>
    <property type="project" value="UniProtKB-UniRule"/>
</dbReference>
<dbReference type="GO" id="GO:0070395">
    <property type="term" value="P:lipoteichoic acid biosynthetic process"/>
    <property type="evidence" value="ECO:0007669"/>
    <property type="project" value="UniProtKB-UniRule"/>
</dbReference>
<dbReference type="CDD" id="cd05945">
    <property type="entry name" value="DltA"/>
    <property type="match status" value="1"/>
</dbReference>
<dbReference type="FunFam" id="3.30.300.30:FF:000012">
    <property type="entry name" value="D-alanine--D-alanyl carrier protein ligase"/>
    <property type="match status" value="1"/>
</dbReference>
<dbReference type="Gene3D" id="3.30.300.30">
    <property type="match status" value="1"/>
</dbReference>
<dbReference type="Gene3D" id="3.40.50.12780">
    <property type="entry name" value="N-terminal domain of ligase-like"/>
    <property type="match status" value="1"/>
</dbReference>
<dbReference type="HAMAP" id="MF_00593">
    <property type="entry name" value="DltA"/>
    <property type="match status" value="1"/>
</dbReference>
<dbReference type="InterPro" id="IPR010071">
    <property type="entry name" value="AA_adenyl_dom"/>
</dbReference>
<dbReference type="InterPro" id="IPR025110">
    <property type="entry name" value="AMP-bd_C"/>
</dbReference>
<dbReference type="InterPro" id="IPR045851">
    <property type="entry name" value="AMP-bd_C_sf"/>
</dbReference>
<dbReference type="InterPro" id="IPR020845">
    <property type="entry name" value="AMP-binding_CS"/>
</dbReference>
<dbReference type="InterPro" id="IPR000873">
    <property type="entry name" value="AMP-dep_synth/lig_dom"/>
</dbReference>
<dbReference type="InterPro" id="IPR042099">
    <property type="entry name" value="ANL_N_sf"/>
</dbReference>
<dbReference type="InterPro" id="IPR010072">
    <property type="entry name" value="DltA"/>
</dbReference>
<dbReference type="InterPro" id="IPR044507">
    <property type="entry name" value="DltA-like"/>
</dbReference>
<dbReference type="NCBIfam" id="TIGR01733">
    <property type="entry name" value="AA-adenyl-dom"/>
    <property type="match status" value="1"/>
</dbReference>
<dbReference type="NCBIfam" id="TIGR01734">
    <property type="entry name" value="D-ala-DACP-lig"/>
    <property type="match status" value="1"/>
</dbReference>
<dbReference type="NCBIfam" id="NF003417">
    <property type="entry name" value="PRK04813.1"/>
    <property type="match status" value="1"/>
</dbReference>
<dbReference type="PANTHER" id="PTHR45398">
    <property type="match status" value="1"/>
</dbReference>
<dbReference type="PANTHER" id="PTHR45398:SF1">
    <property type="entry name" value="ENZYME, PUTATIVE (JCVI)-RELATED"/>
    <property type="match status" value="1"/>
</dbReference>
<dbReference type="Pfam" id="PF00501">
    <property type="entry name" value="AMP-binding"/>
    <property type="match status" value="1"/>
</dbReference>
<dbReference type="Pfam" id="PF13193">
    <property type="entry name" value="AMP-binding_C"/>
    <property type="match status" value="1"/>
</dbReference>
<dbReference type="SUPFAM" id="SSF56801">
    <property type="entry name" value="Acetyl-CoA synthetase-like"/>
    <property type="match status" value="1"/>
</dbReference>
<dbReference type="PROSITE" id="PS00455">
    <property type="entry name" value="AMP_BINDING"/>
    <property type="match status" value="1"/>
</dbReference>
<sequence length="510" mass="57654">MTTSIIERIDAWAEKTPDFPCYEYAGTRLSYKELKRQSDALGSYLLKNLKTDKEKPIIVYGHMSPLMIIAFLGAIKSGRAYVPVDFSMPVERIEQIKKAADPALFICTEELPENLTITDCPVLNAENLVDALEKHFDEKPDPTSCVKNDDNYYIIYTSGSTGNPKGVQISQNNLVSFSNWILQDFSLQQGLRFLNQAPFSFDLSVMDLYPCLLSGGTLVPMDKTITSNLKDLYHEIPAQSFDVWVSTPSFADLCLLDPNFNQENNPNLTRFLFCGEVLAKKTARELLVRFPDAVIYNTYGPTEATVAVTQVRITAELIDAYPSLPLGVIKPDMRLHIIDQETGDVLPDGEKGEIVLIGASVSKGYLNEPEKTDQVFFDYKGYQAYHTGDSGIIKDGYLFFQGRLDFQIKLHGYRIELEDIENNLKKVSLIQNCAIIPKMKDGKVDMLVAQVIPSPNDFTKEYQLSAAIKNELKEFMPTYMIPRKWIYKTEFPLTMNGKIDRKALNQEVNK</sequence>
<proteinExistence type="inferred from homology"/>
<evidence type="ECO:0000255" key="1">
    <source>
        <dbReference type="HAMAP-Rule" id="MF_00593"/>
    </source>
</evidence>
<protein>
    <recommendedName>
        <fullName evidence="1">D-alanine--D-alanyl carrier protein ligase</fullName>
        <shortName evidence="1">DCL</shortName>
        <ecNumber evidence="1">6.2.1.54</ecNumber>
    </recommendedName>
    <alternativeName>
        <fullName evidence="1">D-alanine--poly(phosphoribitol) ligase subunit 1</fullName>
    </alternativeName>
    <alternativeName>
        <fullName evidence="1">D-alanine-activating enzyme</fullName>
        <shortName evidence="1">DAE</shortName>
    </alternativeName>
</protein>
<gene>
    <name evidence="1" type="primary">dltA</name>
    <name type="ordered locus">lwe0956</name>
</gene>
<organism>
    <name type="scientific">Listeria welshimeri serovar 6b (strain ATCC 35897 / DSM 20650 / CCUG 15529 / CIP 8149 / NCTC 11857 / SLCC 5334 / V8)</name>
    <dbReference type="NCBI Taxonomy" id="386043"/>
    <lineage>
        <taxon>Bacteria</taxon>
        <taxon>Bacillati</taxon>
        <taxon>Bacillota</taxon>
        <taxon>Bacilli</taxon>
        <taxon>Bacillales</taxon>
        <taxon>Listeriaceae</taxon>
        <taxon>Listeria</taxon>
    </lineage>
</organism>
<accession>A0AH92</accession>
<comment type="function">
    <text evidence="1">Catalyzes the first step in the D-alanylation of lipoteichoic acid (LTA), the activation of D-alanine and its transfer onto the D-alanyl carrier protein (Dcp) DltC. In an ATP-dependent two-step reaction, forms a high energy D-alanyl-AMP intermediate, followed by transfer of the D-alanyl residue as a thiol ester to the phosphopantheinyl prosthetic group of the Dcp. D-alanylation of LTA plays an important role in modulating the properties of the cell wall in Gram-positive bacteria, influencing the net charge of the cell wall.</text>
</comment>
<comment type="catalytic activity">
    <reaction evidence="1">
        <text>holo-[D-alanyl-carrier protein] + D-alanine + ATP = D-alanyl-[D-alanyl-carrier protein] + AMP + diphosphate</text>
        <dbReference type="Rhea" id="RHEA:55132"/>
        <dbReference type="Rhea" id="RHEA-COMP:14102"/>
        <dbReference type="Rhea" id="RHEA-COMP:14103"/>
        <dbReference type="ChEBI" id="CHEBI:30616"/>
        <dbReference type="ChEBI" id="CHEBI:33019"/>
        <dbReference type="ChEBI" id="CHEBI:57416"/>
        <dbReference type="ChEBI" id="CHEBI:64479"/>
        <dbReference type="ChEBI" id="CHEBI:138620"/>
        <dbReference type="ChEBI" id="CHEBI:456215"/>
        <dbReference type="EC" id="6.2.1.54"/>
    </reaction>
</comment>
<comment type="pathway">
    <text evidence="1">Cell wall biogenesis; lipoteichoic acid biosynthesis.</text>
</comment>
<comment type="subcellular location">
    <subcellularLocation>
        <location evidence="1">Cytoplasm</location>
    </subcellularLocation>
</comment>
<comment type="similarity">
    <text evidence="1">Belongs to the ATP-dependent AMP-binding enzyme family. DltA subfamily.</text>
</comment>
<feature type="chain" id="PRO_1000025531" description="D-alanine--D-alanyl carrier protein ligase">
    <location>
        <begin position="1"/>
        <end position="510"/>
    </location>
</feature>
<feature type="binding site" evidence="1">
    <location>
        <begin position="157"/>
        <end position="158"/>
    </location>
    <ligand>
        <name>ATP</name>
        <dbReference type="ChEBI" id="CHEBI:30616"/>
    </ligand>
</feature>
<feature type="binding site" evidence="1">
    <location>
        <position position="202"/>
    </location>
    <ligand>
        <name>D-alanine</name>
        <dbReference type="ChEBI" id="CHEBI:57416"/>
    </ligand>
</feature>
<feature type="binding site" evidence="1">
    <location>
        <begin position="297"/>
        <end position="302"/>
    </location>
    <ligand>
        <name>ATP</name>
        <dbReference type="ChEBI" id="CHEBI:30616"/>
    </ligand>
</feature>
<feature type="binding site" evidence="1">
    <location>
        <position position="306"/>
    </location>
    <ligand>
        <name>D-alanine</name>
        <dbReference type="ChEBI" id="CHEBI:57416"/>
    </ligand>
</feature>
<feature type="binding site" evidence="1">
    <location>
        <position position="389"/>
    </location>
    <ligand>
        <name>ATP</name>
        <dbReference type="ChEBI" id="CHEBI:30616"/>
    </ligand>
</feature>
<feature type="binding site" evidence="1">
    <location>
        <position position="498"/>
    </location>
    <ligand>
        <name>ATP</name>
        <dbReference type="ChEBI" id="CHEBI:30616"/>
    </ligand>
</feature>
<feature type="binding site" evidence="1">
    <location>
        <position position="498"/>
    </location>
    <ligand>
        <name>D-alanine</name>
        <dbReference type="ChEBI" id="CHEBI:57416"/>
    </ligand>
</feature>
<reference key="1">
    <citation type="journal article" date="2006" name="J. Bacteriol.">
        <title>Whole-genome sequence of Listeria welshimeri reveals common steps in genome reduction with Listeria innocua as compared to Listeria monocytogenes.</title>
        <authorList>
            <person name="Hain T."/>
            <person name="Steinweg C."/>
            <person name="Kuenne C.T."/>
            <person name="Billion A."/>
            <person name="Ghai R."/>
            <person name="Chatterjee S.S."/>
            <person name="Domann E."/>
            <person name="Kaerst U."/>
            <person name="Goesmann A."/>
            <person name="Bekel T."/>
            <person name="Bartels D."/>
            <person name="Kaiser O."/>
            <person name="Meyer F."/>
            <person name="Puehler A."/>
            <person name="Weisshaar B."/>
            <person name="Wehland J."/>
            <person name="Liang C."/>
            <person name="Dandekar T."/>
            <person name="Lampidis R."/>
            <person name="Kreft J."/>
            <person name="Goebel W."/>
            <person name="Chakraborty T."/>
        </authorList>
    </citation>
    <scope>NUCLEOTIDE SEQUENCE [LARGE SCALE GENOMIC DNA]</scope>
    <source>
        <strain>ATCC 35897 / DSM 20650 / CCUG 15529 / CIP 8149 / NCTC 11857 / SLCC 5334 / V8</strain>
    </source>
</reference>
<keyword id="KW-0067">ATP-binding</keyword>
<keyword id="KW-0963">Cytoplasm</keyword>
<keyword id="KW-0436">Ligase</keyword>
<keyword id="KW-0547">Nucleotide-binding</keyword>